<sequence length="179" mass="21057">MSKTLQSFNLLKWIDENKELLKPPVNNKVIWQDSEFIAMILGGPNRRRDFHVDPSDEFFYQIKGECYVECITEEGKREVVTVKEGDVFMLPAMVPHSPHRVANTYGLVIERKRSQGELEDFVWFCDECNHEMHRVRVQLSDIEKQVKEAIHSFNSNKEIRACKNCGHIMPEEVEEWKCE</sequence>
<dbReference type="EC" id="1.13.11.6" evidence="1"/>
<dbReference type="EMBL" id="CP001407">
    <property type="protein sequence ID" value="ACO28730.1"/>
    <property type="molecule type" value="Genomic_DNA"/>
</dbReference>
<dbReference type="RefSeq" id="WP_000047733.1">
    <property type="nucleotide sequence ID" value="NZ_CP009318.1"/>
</dbReference>
<dbReference type="SMR" id="C1ERL1"/>
<dbReference type="KEGG" id="bcx:BCA_2149"/>
<dbReference type="PATRIC" id="fig|572264.18.peg.2095"/>
<dbReference type="UniPathway" id="UPA00253">
    <property type="reaction ID" value="UER00330"/>
</dbReference>
<dbReference type="Proteomes" id="UP000002210">
    <property type="component" value="Chromosome"/>
</dbReference>
<dbReference type="GO" id="GO:0005737">
    <property type="term" value="C:cytoplasm"/>
    <property type="evidence" value="ECO:0007669"/>
    <property type="project" value="TreeGrafter"/>
</dbReference>
<dbReference type="GO" id="GO:0000334">
    <property type="term" value="F:3-hydroxyanthranilate 3,4-dioxygenase activity"/>
    <property type="evidence" value="ECO:0007669"/>
    <property type="project" value="UniProtKB-UniRule"/>
</dbReference>
<dbReference type="GO" id="GO:0008198">
    <property type="term" value="F:ferrous iron binding"/>
    <property type="evidence" value="ECO:0007669"/>
    <property type="project" value="UniProtKB-UniRule"/>
</dbReference>
<dbReference type="GO" id="GO:0043420">
    <property type="term" value="P:anthranilate metabolic process"/>
    <property type="evidence" value="ECO:0007669"/>
    <property type="project" value="UniProtKB-UniRule"/>
</dbReference>
<dbReference type="GO" id="GO:0006569">
    <property type="term" value="P:L-tryptophan catabolic process"/>
    <property type="evidence" value="ECO:0007669"/>
    <property type="project" value="UniProtKB-UniRule"/>
</dbReference>
<dbReference type="GO" id="GO:0009435">
    <property type="term" value="P:NAD biosynthetic process"/>
    <property type="evidence" value="ECO:0007669"/>
    <property type="project" value="UniProtKB-UniPathway"/>
</dbReference>
<dbReference type="GO" id="GO:0019805">
    <property type="term" value="P:quinolinate biosynthetic process"/>
    <property type="evidence" value="ECO:0007669"/>
    <property type="project" value="UniProtKB-UniRule"/>
</dbReference>
<dbReference type="CDD" id="cd06123">
    <property type="entry name" value="cupin_HAO"/>
    <property type="match status" value="1"/>
</dbReference>
<dbReference type="Gene3D" id="2.60.120.10">
    <property type="entry name" value="Jelly Rolls"/>
    <property type="match status" value="1"/>
</dbReference>
<dbReference type="HAMAP" id="MF_00825">
    <property type="entry name" value="3_HAO"/>
    <property type="match status" value="1"/>
</dbReference>
<dbReference type="InterPro" id="IPR010329">
    <property type="entry name" value="3hydroanth_dOase"/>
</dbReference>
<dbReference type="InterPro" id="IPR014710">
    <property type="entry name" value="RmlC-like_jellyroll"/>
</dbReference>
<dbReference type="InterPro" id="IPR011051">
    <property type="entry name" value="RmlC_Cupin_sf"/>
</dbReference>
<dbReference type="NCBIfam" id="TIGR03037">
    <property type="entry name" value="anthran_nbaC"/>
    <property type="match status" value="1"/>
</dbReference>
<dbReference type="NCBIfam" id="NF009763">
    <property type="entry name" value="PRK13264.1"/>
    <property type="match status" value="1"/>
</dbReference>
<dbReference type="PANTHER" id="PTHR15497">
    <property type="entry name" value="3-HYDROXYANTHRANILATE 3,4-DIOXYGENASE"/>
    <property type="match status" value="1"/>
</dbReference>
<dbReference type="PANTHER" id="PTHR15497:SF1">
    <property type="entry name" value="3-HYDROXYANTHRANILATE 3,4-DIOXYGENASE"/>
    <property type="match status" value="1"/>
</dbReference>
<dbReference type="Pfam" id="PF06052">
    <property type="entry name" value="3-HAO"/>
    <property type="match status" value="1"/>
</dbReference>
<dbReference type="SUPFAM" id="SSF51182">
    <property type="entry name" value="RmlC-like cupins"/>
    <property type="match status" value="1"/>
</dbReference>
<protein>
    <recommendedName>
        <fullName evidence="1">3-hydroxyanthranilate 3,4-dioxygenase</fullName>
        <ecNumber evidence="1">1.13.11.6</ecNumber>
    </recommendedName>
    <alternativeName>
        <fullName evidence="1">3-hydroxyanthranilate oxygenase</fullName>
        <shortName evidence="1">3-HAO</shortName>
    </alternativeName>
    <alternativeName>
        <fullName evidence="1">3-hydroxyanthranilic acid dioxygenase</fullName>
        <shortName evidence="1">HAD</shortName>
    </alternativeName>
</protein>
<organism>
    <name type="scientific">Bacillus cereus (strain 03BB102)</name>
    <dbReference type="NCBI Taxonomy" id="572264"/>
    <lineage>
        <taxon>Bacteria</taxon>
        <taxon>Bacillati</taxon>
        <taxon>Bacillota</taxon>
        <taxon>Bacilli</taxon>
        <taxon>Bacillales</taxon>
        <taxon>Bacillaceae</taxon>
        <taxon>Bacillus</taxon>
        <taxon>Bacillus cereus group</taxon>
    </lineage>
</organism>
<accession>C1ERL1</accession>
<feature type="chain" id="PRO_1000148766" description="3-hydroxyanthranilate 3,4-dioxygenase">
    <location>
        <begin position="1"/>
        <end position="179"/>
    </location>
</feature>
<feature type="binding site" evidence="1">
    <location>
        <position position="47"/>
    </location>
    <ligand>
        <name>O2</name>
        <dbReference type="ChEBI" id="CHEBI:15379"/>
    </ligand>
</feature>
<feature type="binding site" evidence="1">
    <location>
        <position position="51"/>
    </location>
    <ligand>
        <name>Fe cation</name>
        <dbReference type="ChEBI" id="CHEBI:24875"/>
        <label>1</label>
        <note>catalytic</note>
    </ligand>
</feature>
<feature type="binding site" evidence="1">
    <location>
        <position position="57"/>
    </location>
    <ligand>
        <name>Fe cation</name>
        <dbReference type="ChEBI" id="CHEBI:24875"/>
        <label>1</label>
        <note>catalytic</note>
    </ligand>
</feature>
<feature type="binding site" evidence="1">
    <location>
        <position position="57"/>
    </location>
    <ligand>
        <name>substrate</name>
    </ligand>
</feature>
<feature type="binding site" evidence="1">
    <location>
        <position position="96"/>
    </location>
    <ligand>
        <name>Fe cation</name>
        <dbReference type="ChEBI" id="CHEBI:24875"/>
        <label>1</label>
        <note>catalytic</note>
    </ligand>
</feature>
<feature type="binding site" evidence="1">
    <location>
        <position position="100"/>
    </location>
    <ligand>
        <name>substrate</name>
    </ligand>
</feature>
<feature type="binding site" evidence="1">
    <location>
        <position position="110"/>
    </location>
    <ligand>
        <name>substrate</name>
    </ligand>
</feature>
<feature type="binding site" evidence="1">
    <location>
        <position position="125"/>
    </location>
    <ligand>
        <name>Fe cation</name>
        <dbReference type="ChEBI" id="CHEBI:24875"/>
        <label>2</label>
    </ligand>
</feature>
<feature type="binding site" evidence="1">
    <location>
        <position position="128"/>
    </location>
    <ligand>
        <name>Fe cation</name>
        <dbReference type="ChEBI" id="CHEBI:24875"/>
        <label>2</label>
    </ligand>
</feature>
<feature type="binding site" evidence="1">
    <location>
        <position position="162"/>
    </location>
    <ligand>
        <name>Fe cation</name>
        <dbReference type="ChEBI" id="CHEBI:24875"/>
        <label>2</label>
    </ligand>
</feature>
<feature type="binding site" evidence="1">
    <location>
        <position position="165"/>
    </location>
    <ligand>
        <name>Fe cation</name>
        <dbReference type="ChEBI" id="CHEBI:24875"/>
        <label>2</label>
    </ligand>
</feature>
<comment type="function">
    <text evidence="1">Catalyzes the oxidative ring opening of 3-hydroxyanthranilate to 2-amino-3-carboxymuconate semialdehyde, which spontaneously cyclizes to quinolinate.</text>
</comment>
<comment type="catalytic activity">
    <reaction evidence="1">
        <text>3-hydroxyanthranilate + O2 = (2Z,4Z)-2-amino-3-carboxymuconate 6-semialdehyde</text>
        <dbReference type="Rhea" id="RHEA:17953"/>
        <dbReference type="ChEBI" id="CHEBI:15379"/>
        <dbReference type="ChEBI" id="CHEBI:36559"/>
        <dbReference type="ChEBI" id="CHEBI:77612"/>
        <dbReference type="EC" id="1.13.11.6"/>
    </reaction>
</comment>
<comment type="cofactor">
    <cofactor evidence="1">
        <name>Fe(2+)</name>
        <dbReference type="ChEBI" id="CHEBI:29033"/>
    </cofactor>
    <text evidence="1">Binds 2 Fe(2+) ions per subunit.</text>
</comment>
<comment type="pathway">
    <text evidence="1">Cofactor biosynthesis; NAD(+) biosynthesis; quinolinate from L-kynurenine: step 3/3.</text>
</comment>
<comment type="similarity">
    <text evidence="1">Belongs to the 3-HAO family.</text>
</comment>
<keyword id="KW-0223">Dioxygenase</keyword>
<keyword id="KW-0408">Iron</keyword>
<keyword id="KW-0479">Metal-binding</keyword>
<keyword id="KW-0560">Oxidoreductase</keyword>
<keyword id="KW-0662">Pyridine nucleotide biosynthesis</keyword>
<reference key="1">
    <citation type="submission" date="2009-02" db="EMBL/GenBank/DDBJ databases">
        <title>Genome sequence of Bacillus cereus 03BB102.</title>
        <authorList>
            <person name="Dodson R.J."/>
            <person name="Jackson P."/>
            <person name="Munk A.C."/>
            <person name="Brettin T."/>
            <person name="Bruce D."/>
            <person name="Detter C."/>
            <person name="Tapia R."/>
            <person name="Han C."/>
            <person name="Sutton G."/>
            <person name="Sims D."/>
        </authorList>
    </citation>
    <scope>NUCLEOTIDE SEQUENCE [LARGE SCALE GENOMIC DNA]</scope>
    <source>
        <strain>03BB102</strain>
    </source>
</reference>
<evidence type="ECO:0000255" key="1">
    <source>
        <dbReference type="HAMAP-Rule" id="MF_00825"/>
    </source>
</evidence>
<proteinExistence type="inferred from homology"/>
<gene>
    <name evidence="1" type="primary">nbaC</name>
    <name type="ordered locus">BCA_2149</name>
</gene>
<name>3HAO_BACC3</name>